<comment type="catalytic activity">
    <reaction evidence="1">
        <text>tRNA(Cys) + L-cysteine + ATP = L-cysteinyl-tRNA(Cys) + AMP + diphosphate</text>
        <dbReference type="Rhea" id="RHEA:17773"/>
        <dbReference type="Rhea" id="RHEA-COMP:9661"/>
        <dbReference type="Rhea" id="RHEA-COMP:9679"/>
        <dbReference type="ChEBI" id="CHEBI:30616"/>
        <dbReference type="ChEBI" id="CHEBI:33019"/>
        <dbReference type="ChEBI" id="CHEBI:35235"/>
        <dbReference type="ChEBI" id="CHEBI:78442"/>
        <dbReference type="ChEBI" id="CHEBI:78517"/>
        <dbReference type="ChEBI" id="CHEBI:456215"/>
        <dbReference type="EC" id="6.1.1.16"/>
    </reaction>
</comment>
<comment type="cofactor">
    <cofactor evidence="1">
        <name>Zn(2+)</name>
        <dbReference type="ChEBI" id="CHEBI:29105"/>
    </cofactor>
    <text evidence="1">Binds 1 zinc ion per subunit.</text>
</comment>
<comment type="subunit">
    <text evidence="1">Monomer.</text>
</comment>
<comment type="subcellular location">
    <subcellularLocation>
        <location evidence="1">Cytoplasm</location>
    </subcellularLocation>
</comment>
<comment type="similarity">
    <text evidence="1">Belongs to the class-I aminoacyl-tRNA synthetase family.</text>
</comment>
<gene>
    <name evidence="1" type="primary">cysS</name>
    <name type="ordered locus">SG0549</name>
</gene>
<evidence type="ECO:0000255" key="1">
    <source>
        <dbReference type="HAMAP-Rule" id="MF_00041"/>
    </source>
</evidence>
<accession>B5R6X0</accession>
<reference key="1">
    <citation type="journal article" date="2008" name="Genome Res.">
        <title>Comparative genome analysis of Salmonella enteritidis PT4 and Salmonella gallinarum 287/91 provides insights into evolutionary and host adaptation pathways.</title>
        <authorList>
            <person name="Thomson N.R."/>
            <person name="Clayton D.J."/>
            <person name="Windhorst D."/>
            <person name="Vernikos G."/>
            <person name="Davidson S."/>
            <person name="Churcher C."/>
            <person name="Quail M.A."/>
            <person name="Stevens M."/>
            <person name="Jones M.A."/>
            <person name="Watson M."/>
            <person name="Barron A."/>
            <person name="Layton A."/>
            <person name="Pickard D."/>
            <person name="Kingsley R.A."/>
            <person name="Bignell A."/>
            <person name="Clark L."/>
            <person name="Harris B."/>
            <person name="Ormond D."/>
            <person name="Abdellah Z."/>
            <person name="Brooks K."/>
            <person name="Cherevach I."/>
            <person name="Chillingworth T."/>
            <person name="Woodward J."/>
            <person name="Norberczak H."/>
            <person name="Lord A."/>
            <person name="Arrowsmith C."/>
            <person name="Jagels K."/>
            <person name="Moule S."/>
            <person name="Mungall K."/>
            <person name="Saunders M."/>
            <person name="Whitehead S."/>
            <person name="Chabalgoity J.A."/>
            <person name="Maskell D."/>
            <person name="Humphreys T."/>
            <person name="Roberts M."/>
            <person name="Barrow P.A."/>
            <person name="Dougan G."/>
            <person name="Parkhill J."/>
        </authorList>
    </citation>
    <scope>NUCLEOTIDE SEQUENCE [LARGE SCALE GENOMIC DNA]</scope>
    <source>
        <strain>287/91 / NCTC 13346</strain>
    </source>
</reference>
<organism>
    <name type="scientific">Salmonella gallinarum (strain 287/91 / NCTC 13346)</name>
    <dbReference type="NCBI Taxonomy" id="550538"/>
    <lineage>
        <taxon>Bacteria</taxon>
        <taxon>Pseudomonadati</taxon>
        <taxon>Pseudomonadota</taxon>
        <taxon>Gammaproteobacteria</taxon>
        <taxon>Enterobacterales</taxon>
        <taxon>Enterobacteriaceae</taxon>
        <taxon>Salmonella</taxon>
    </lineage>
</organism>
<keyword id="KW-0030">Aminoacyl-tRNA synthetase</keyword>
<keyword id="KW-0067">ATP-binding</keyword>
<keyword id="KW-0963">Cytoplasm</keyword>
<keyword id="KW-0436">Ligase</keyword>
<keyword id="KW-0479">Metal-binding</keyword>
<keyword id="KW-0547">Nucleotide-binding</keyword>
<keyword id="KW-0648">Protein biosynthesis</keyword>
<keyword id="KW-0862">Zinc</keyword>
<protein>
    <recommendedName>
        <fullName evidence="1">Cysteine--tRNA ligase</fullName>
        <ecNumber evidence="1">6.1.1.16</ecNumber>
    </recommendedName>
    <alternativeName>
        <fullName evidence="1">Cysteinyl-tRNA synthetase</fullName>
        <shortName evidence="1">CysRS</shortName>
    </alternativeName>
</protein>
<proteinExistence type="inferred from homology"/>
<sequence length="461" mass="52257">MLKIFNTLTRQKEEFKPIHAGEVGMYVCGITVYDLCHIGHGRTFVAFDVVARYLRFLGYKLKYVRNITDIDDKIIKRANENGESFVALVDRMIAEMHQDFDALNILRPDSEPRATHHIQEIIELTRTLIEKGHAYVADNGDVMFDVPTDPTYGQLSRQDLEQLQAGARVDVVDVKRNPMDFVLWKMSKEGEPSWPSPWGEGRPGWHIECSAMNCKQLGNHFDIHGGGSDLMFPHHENEIAQSTCAHDGEYVNYWMHSGMVMVDREKMSKSLGNFFTVRDVLKYYDAETVRYFLMSGHYRSQLNYSEENLKQARASLERLYTALRGTDKSAAPAGGEAFEARFVEAMNDDFNTPEAYSVLFDMAREVNRLKGEDMTAANAMASHLRKISGVLGLLEQEPDVFLQSGAQADDGEVAEIEALIQQRLDARKAKDWAAADAARDRLAEMGIILEDGPQGTTWRRK</sequence>
<name>SYC_SALG2</name>
<feature type="chain" id="PRO_1000090868" description="Cysteine--tRNA ligase">
    <location>
        <begin position="1"/>
        <end position="461"/>
    </location>
</feature>
<feature type="short sequence motif" description="'HIGH' region">
    <location>
        <begin position="30"/>
        <end position="40"/>
    </location>
</feature>
<feature type="short sequence motif" description="'KMSKS' region">
    <location>
        <begin position="266"/>
        <end position="270"/>
    </location>
</feature>
<feature type="binding site" evidence="1">
    <location>
        <position position="28"/>
    </location>
    <ligand>
        <name>Zn(2+)</name>
        <dbReference type="ChEBI" id="CHEBI:29105"/>
    </ligand>
</feature>
<feature type="binding site" evidence="1">
    <location>
        <position position="209"/>
    </location>
    <ligand>
        <name>Zn(2+)</name>
        <dbReference type="ChEBI" id="CHEBI:29105"/>
    </ligand>
</feature>
<feature type="binding site" evidence="1">
    <location>
        <position position="234"/>
    </location>
    <ligand>
        <name>Zn(2+)</name>
        <dbReference type="ChEBI" id="CHEBI:29105"/>
    </ligand>
</feature>
<feature type="binding site" evidence="1">
    <location>
        <position position="238"/>
    </location>
    <ligand>
        <name>Zn(2+)</name>
        <dbReference type="ChEBI" id="CHEBI:29105"/>
    </ligand>
</feature>
<feature type="binding site" evidence="1">
    <location>
        <position position="269"/>
    </location>
    <ligand>
        <name>ATP</name>
        <dbReference type="ChEBI" id="CHEBI:30616"/>
    </ligand>
</feature>
<dbReference type="EC" id="6.1.1.16" evidence="1"/>
<dbReference type="EMBL" id="AM933173">
    <property type="protein sequence ID" value="CAR36445.1"/>
    <property type="molecule type" value="Genomic_DNA"/>
</dbReference>
<dbReference type="RefSeq" id="WP_000912376.1">
    <property type="nucleotide sequence ID" value="NC_011274.1"/>
</dbReference>
<dbReference type="SMR" id="B5R6X0"/>
<dbReference type="KEGG" id="seg:SG0549"/>
<dbReference type="HOGENOM" id="CLU_013528_0_1_6"/>
<dbReference type="Proteomes" id="UP000008321">
    <property type="component" value="Chromosome"/>
</dbReference>
<dbReference type="GO" id="GO:0005829">
    <property type="term" value="C:cytosol"/>
    <property type="evidence" value="ECO:0007669"/>
    <property type="project" value="TreeGrafter"/>
</dbReference>
<dbReference type="GO" id="GO:0005524">
    <property type="term" value="F:ATP binding"/>
    <property type="evidence" value="ECO:0007669"/>
    <property type="project" value="UniProtKB-UniRule"/>
</dbReference>
<dbReference type="GO" id="GO:0004817">
    <property type="term" value="F:cysteine-tRNA ligase activity"/>
    <property type="evidence" value="ECO:0007669"/>
    <property type="project" value="UniProtKB-UniRule"/>
</dbReference>
<dbReference type="GO" id="GO:0008270">
    <property type="term" value="F:zinc ion binding"/>
    <property type="evidence" value="ECO:0007669"/>
    <property type="project" value="UniProtKB-UniRule"/>
</dbReference>
<dbReference type="GO" id="GO:0006423">
    <property type="term" value="P:cysteinyl-tRNA aminoacylation"/>
    <property type="evidence" value="ECO:0007669"/>
    <property type="project" value="UniProtKB-UniRule"/>
</dbReference>
<dbReference type="CDD" id="cd07963">
    <property type="entry name" value="Anticodon_Ia_Cys"/>
    <property type="match status" value="1"/>
</dbReference>
<dbReference type="CDD" id="cd00672">
    <property type="entry name" value="CysRS_core"/>
    <property type="match status" value="1"/>
</dbReference>
<dbReference type="FunFam" id="1.20.120.1910:FF:000001">
    <property type="entry name" value="Cysteine--tRNA ligase"/>
    <property type="match status" value="1"/>
</dbReference>
<dbReference type="FunFam" id="3.40.50.620:FF:000009">
    <property type="entry name" value="Cysteine--tRNA ligase"/>
    <property type="match status" value="1"/>
</dbReference>
<dbReference type="Gene3D" id="1.20.120.1910">
    <property type="entry name" value="Cysteine-tRNA ligase, C-terminal anti-codon recognition domain"/>
    <property type="match status" value="1"/>
</dbReference>
<dbReference type="Gene3D" id="3.40.50.620">
    <property type="entry name" value="HUPs"/>
    <property type="match status" value="1"/>
</dbReference>
<dbReference type="HAMAP" id="MF_00041">
    <property type="entry name" value="Cys_tRNA_synth"/>
    <property type="match status" value="1"/>
</dbReference>
<dbReference type="InterPro" id="IPR015803">
    <property type="entry name" value="Cys-tRNA-ligase"/>
</dbReference>
<dbReference type="InterPro" id="IPR015273">
    <property type="entry name" value="Cys-tRNA-synt_Ia_DALR"/>
</dbReference>
<dbReference type="InterPro" id="IPR024909">
    <property type="entry name" value="Cys-tRNA/MSH_ligase"/>
</dbReference>
<dbReference type="InterPro" id="IPR056411">
    <property type="entry name" value="CysS_C"/>
</dbReference>
<dbReference type="InterPro" id="IPR014729">
    <property type="entry name" value="Rossmann-like_a/b/a_fold"/>
</dbReference>
<dbReference type="InterPro" id="IPR032678">
    <property type="entry name" value="tRNA-synt_1_cat_dom"/>
</dbReference>
<dbReference type="InterPro" id="IPR009080">
    <property type="entry name" value="tRNAsynth_Ia_anticodon-bd"/>
</dbReference>
<dbReference type="NCBIfam" id="TIGR00435">
    <property type="entry name" value="cysS"/>
    <property type="match status" value="1"/>
</dbReference>
<dbReference type="PANTHER" id="PTHR10890:SF3">
    <property type="entry name" value="CYSTEINE--TRNA LIGASE, CYTOPLASMIC"/>
    <property type="match status" value="1"/>
</dbReference>
<dbReference type="PANTHER" id="PTHR10890">
    <property type="entry name" value="CYSTEINYL-TRNA SYNTHETASE"/>
    <property type="match status" value="1"/>
</dbReference>
<dbReference type="Pfam" id="PF23493">
    <property type="entry name" value="CysS_C"/>
    <property type="match status" value="1"/>
</dbReference>
<dbReference type="Pfam" id="PF09190">
    <property type="entry name" value="DALR_2"/>
    <property type="match status" value="1"/>
</dbReference>
<dbReference type="Pfam" id="PF01406">
    <property type="entry name" value="tRNA-synt_1e"/>
    <property type="match status" value="1"/>
</dbReference>
<dbReference type="PRINTS" id="PR00983">
    <property type="entry name" value="TRNASYNTHCYS"/>
</dbReference>
<dbReference type="SMART" id="SM00840">
    <property type="entry name" value="DALR_2"/>
    <property type="match status" value="1"/>
</dbReference>
<dbReference type="SUPFAM" id="SSF47323">
    <property type="entry name" value="Anticodon-binding domain of a subclass of class I aminoacyl-tRNA synthetases"/>
    <property type="match status" value="1"/>
</dbReference>
<dbReference type="SUPFAM" id="SSF52374">
    <property type="entry name" value="Nucleotidylyl transferase"/>
    <property type="match status" value="1"/>
</dbReference>